<organism>
    <name type="scientific">Burkholderia cenocepacia (strain HI2424)</name>
    <dbReference type="NCBI Taxonomy" id="331272"/>
    <lineage>
        <taxon>Bacteria</taxon>
        <taxon>Pseudomonadati</taxon>
        <taxon>Pseudomonadota</taxon>
        <taxon>Betaproteobacteria</taxon>
        <taxon>Burkholderiales</taxon>
        <taxon>Burkholderiaceae</taxon>
        <taxon>Burkholderia</taxon>
        <taxon>Burkholderia cepacia complex</taxon>
    </lineage>
</organism>
<comment type="function">
    <text evidence="1">One of the early assembly proteins it binds 23S rRNA. One of the proteins that surrounds the polypeptide exit tunnel on the outside of the ribosome. Forms the main docking site for trigger factor binding to the ribosome.</text>
</comment>
<comment type="subunit">
    <text evidence="1">Part of the 50S ribosomal subunit. Contacts protein L29, and trigger factor when it is bound to the ribosome.</text>
</comment>
<comment type="similarity">
    <text evidence="1">Belongs to the universal ribosomal protein uL23 family.</text>
</comment>
<feature type="chain" id="PRO_1000068045" description="Large ribosomal subunit protein uL23">
    <location>
        <begin position="1"/>
        <end position="104"/>
    </location>
</feature>
<reference key="1">
    <citation type="submission" date="2006-08" db="EMBL/GenBank/DDBJ databases">
        <title>Complete sequence of chromosome 1 of Burkholderia cenocepacia HI2424.</title>
        <authorList>
            <person name="Copeland A."/>
            <person name="Lucas S."/>
            <person name="Lapidus A."/>
            <person name="Barry K."/>
            <person name="Detter J.C."/>
            <person name="Glavina del Rio T."/>
            <person name="Hammon N."/>
            <person name="Israni S."/>
            <person name="Pitluck S."/>
            <person name="Chain P."/>
            <person name="Malfatti S."/>
            <person name="Shin M."/>
            <person name="Vergez L."/>
            <person name="Schmutz J."/>
            <person name="Larimer F."/>
            <person name="Land M."/>
            <person name="Hauser L."/>
            <person name="Kyrpides N."/>
            <person name="Kim E."/>
            <person name="LiPuma J.J."/>
            <person name="Gonzalez C.F."/>
            <person name="Konstantinidis K."/>
            <person name="Tiedje J.M."/>
            <person name="Richardson P."/>
        </authorList>
    </citation>
    <scope>NUCLEOTIDE SEQUENCE [LARGE SCALE GENOMIC DNA]</scope>
    <source>
        <strain>HI2424</strain>
    </source>
</reference>
<accession>A0K3M7</accession>
<evidence type="ECO:0000255" key="1">
    <source>
        <dbReference type="HAMAP-Rule" id="MF_01369"/>
    </source>
</evidence>
<evidence type="ECO:0000305" key="2"/>
<name>RL23_BURCH</name>
<sequence>MSEIRKNDHRLMQVLLAPVISEKATLVADKNEQVVFEVAPDATKQEVKAAVELLFKVEVDSVNVLVQKGKQKRFGRSMGRRKDVKKAYVCLKPGQEINFEAEAK</sequence>
<dbReference type="EMBL" id="CP000458">
    <property type="protein sequence ID" value="ABK07104.1"/>
    <property type="molecule type" value="Genomic_DNA"/>
</dbReference>
<dbReference type="RefSeq" id="WP_004199275.1">
    <property type="nucleotide sequence ID" value="NC_008542.1"/>
</dbReference>
<dbReference type="SMR" id="A0K3M7"/>
<dbReference type="GeneID" id="98107158"/>
<dbReference type="KEGG" id="bch:Bcen2424_0350"/>
<dbReference type="HOGENOM" id="CLU_037562_3_1_4"/>
<dbReference type="GO" id="GO:1990904">
    <property type="term" value="C:ribonucleoprotein complex"/>
    <property type="evidence" value="ECO:0007669"/>
    <property type="project" value="UniProtKB-KW"/>
</dbReference>
<dbReference type="GO" id="GO:0005840">
    <property type="term" value="C:ribosome"/>
    <property type="evidence" value="ECO:0007669"/>
    <property type="project" value="UniProtKB-KW"/>
</dbReference>
<dbReference type="GO" id="GO:0019843">
    <property type="term" value="F:rRNA binding"/>
    <property type="evidence" value="ECO:0007669"/>
    <property type="project" value="UniProtKB-UniRule"/>
</dbReference>
<dbReference type="GO" id="GO:0003735">
    <property type="term" value="F:structural constituent of ribosome"/>
    <property type="evidence" value="ECO:0007669"/>
    <property type="project" value="InterPro"/>
</dbReference>
<dbReference type="GO" id="GO:0006412">
    <property type="term" value="P:translation"/>
    <property type="evidence" value="ECO:0007669"/>
    <property type="project" value="UniProtKB-UniRule"/>
</dbReference>
<dbReference type="FunFam" id="3.30.70.330:FF:000001">
    <property type="entry name" value="50S ribosomal protein L23"/>
    <property type="match status" value="1"/>
</dbReference>
<dbReference type="Gene3D" id="3.30.70.330">
    <property type="match status" value="1"/>
</dbReference>
<dbReference type="HAMAP" id="MF_01369_B">
    <property type="entry name" value="Ribosomal_uL23_B"/>
    <property type="match status" value="1"/>
</dbReference>
<dbReference type="InterPro" id="IPR012677">
    <property type="entry name" value="Nucleotide-bd_a/b_plait_sf"/>
</dbReference>
<dbReference type="InterPro" id="IPR013025">
    <property type="entry name" value="Ribosomal_uL23-like"/>
</dbReference>
<dbReference type="InterPro" id="IPR012678">
    <property type="entry name" value="Ribosomal_uL23/eL15/eS24_sf"/>
</dbReference>
<dbReference type="NCBIfam" id="NF004359">
    <property type="entry name" value="PRK05738.1-3"/>
    <property type="match status" value="1"/>
</dbReference>
<dbReference type="NCBIfam" id="NF004363">
    <property type="entry name" value="PRK05738.2-4"/>
    <property type="match status" value="1"/>
</dbReference>
<dbReference type="PANTHER" id="PTHR11620">
    <property type="entry name" value="60S RIBOSOMAL PROTEIN L23A"/>
    <property type="match status" value="1"/>
</dbReference>
<dbReference type="Pfam" id="PF00276">
    <property type="entry name" value="Ribosomal_L23"/>
    <property type="match status" value="1"/>
</dbReference>
<dbReference type="SUPFAM" id="SSF54189">
    <property type="entry name" value="Ribosomal proteins S24e, L23 and L15e"/>
    <property type="match status" value="1"/>
</dbReference>
<gene>
    <name evidence="1" type="primary">rplW</name>
    <name type="ordered locus">Bcen2424_0350</name>
</gene>
<proteinExistence type="inferred from homology"/>
<keyword id="KW-0687">Ribonucleoprotein</keyword>
<keyword id="KW-0689">Ribosomal protein</keyword>
<keyword id="KW-0694">RNA-binding</keyword>
<keyword id="KW-0699">rRNA-binding</keyword>
<protein>
    <recommendedName>
        <fullName evidence="1">Large ribosomal subunit protein uL23</fullName>
    </recommendedName>
    <alternativeName>
        <fullName evidence="2">50S ribosomal protein L23</fullName>
    </alternativeName>
</protein>